<name>LIPB_RICB8</name>
<keyword id="KW-0012">Acyltransferase</keyword>
<keyword id="KW-0963">Cytoplasm</keyword>
<keyword id="KW-0808">Transferase</keyword>
<accession>A8GUN4</accession>
<feature type="chain" id="PRO_1000001124" description="Octanoyltransferase">
    <location>
        <begin position="1"/>
        <end position="209"/>
    </location>
</feature>
<feature type="domain" description="BPL/LPL catalytic" evidence="2">
    <location>
        <begin position="30"/>
        <end position="209"/>
    </location>
</feature>
<feature type="active site" description="Acyl-thioester intermediate" evidence="1">
    <location>
        <position position="174"/>
    </location>
</feature>
<feature type="binding site" evidence="1">
    <location>
        <begin position="69"/>
        <end position="76"/>
    </location>
    <ligand>
        <name>substrate</name>
    </ligand>
</feature>
<feature type="binding site" evidence="1">
    <location>
        <begin position="143"/>
        <end position="145"/>
    </location>
    <ligand>
        <name>substrate</name>
    </ligand>
</feature>
<feature type="binding site" evidence="1">
    <location>
        <begin position="156"/>
        <end position="158"/>
    </location>
    <ligand>
        <name>substrate</name>
    </ligand>
</feature>
<feature type="site" description="Lowers pKa of active site Cys" evidence="1">
    <location>
        <position position="140"/>
    </location>
</feature>
<evidence type="ECO:0000255" key="1">
    <source>
        <dbReference type="HAMAP-Rule" id="MF_00013"/>
    </source>
</evidence>
<evidence type="ECO:0000255" key="2">
    <source>
        <dbReference type="PROSITE-ProRule" id="PRU01067"/>
    </source>
</evidence>
<proteinExistence type="inferred from homology"/>
<dbReference type="EC" id="2.3.1.181" evidence="1"/>
<dbReference type="EMBL" id="CP000849">
    <property type="protein sequence ID" value="ABV78530.1"/>
    <property type="molecule type" value="Genomic_DNA"/>
</dbReference>
<dbReference type="RefSeq" id="WP_011476748.1">
    <property type="nucleotide sequence ID" value="NC_009883.1"/>
</dbReference>
<dbReference type="SMR" id="A8GUN4"/>
<dbReference type="KEGG" id="rbo:A1I_00640"/>
<dbReference type="HOGENOM" id="CLU_035168_3_0_5"/>
<dbReference type="UniPathway" id="UPA00538">
    <property type="reaction ID" value="UER00592"/>
</dbReference>
<dbReference type="GO" id="GO:0005737">
    <property type="term" value="C:cytoplasm"/>
    <property type="evidence" value="ECO:0007669"/>
    <property type="project" value="UniProtKB-SubCell"/>
</dbReference>
<dbReference type="GO" id="GO:0033819">
    <property type="term" value="F:lipoyl(octanoyl) transferase activity"/>
    <property type="evidence" value="ECO:0007669"/>
    <property type="project" value="UniProtKB-EC"/>
</dbReference>
<dbReference type="GO" id="GO:0036211">
    <property type="term" value="P:protein modification process"/>
    <property type="evidence" value="ECO:0007669"/>
    <property type="project" value="InterPro"/>
</dbReference>
<dbReference type="CDD" id="cd16444">
    <property type="entry name" value="LipB"/>
    <property type="match status" value="1"/>
</dbReference>
<dbReference type="Gene3D" id="3.30.930.10">
    <property type="entry name" value="Bira Bifunctional Protein, Domain 2"/>
    <property type="match status" value="1"/>
</dbReference>
<dbReference type="HAMAP" id="MF_00013">
    <property type="entry name" value="LipB"/>
    <property type="match status" value="1"/>
</dbReference>
<dbReference type="InterPro" id="IPR045864">
    <property type="entry name" value="aa-tRNA-synth_II/BPL/LPL"/>
</dbReference>
<dbReference type="InterPro" id="IPR004143">
    <property type="entry name" value="BPL_LPL_catalytic"/>
</dbReference>
<dbReference type="InterPro" id="IPR000544">
    <property type="entry name" value="Octanoyltransferase"/>
</dbReference>
<dbReference type="InterPro" id="IPR020605">
    <property type="entry name" value="Octanoyltransferase_CS"/>
</dbReference>
<dbReference type="NCBIfam" id="TIGR00214">
    <property type="entry name" value="lipB"/>
    <property type="match status" value="1"/>
</dbReference>
<dbReference type="NCBIfam" id="NF010921">
    <property type="entry name" value="PRK14341.1"/>
    <property type="match status" value="1"/>
</dbReference>
<dbReference type="NCBIfam" id="NF010925">
    <property type="entry name" value="PRK14345.1"/>
    <property type="match status" value="1"/>
</dbReference>
<dbReference type="PANTHER" id="PTHR10993:SF7">
    <property type="entry name" value="LIPOYLTRANSFERASE 2, MITOCHONDRIAL-RELATED"/>
    <property type="match status" value="1"/>
</dbReference>
<dbReference type="PANTHER" id="PTHR10993">
    <property type="entry name" value="OCTANOYLTRANSFERASE"/>
    <property type="match status" value="1"/>
</dbReference>
<dbReference type="Pfam" id="PF21948">
    <property type="entry name" value="LplA-B_cat"/>
    <property type="match status" value="1"/>
</dbReference>
<dbReference type="PIRSF" id="PIRSF016262">
    <property type="entry name" value="LPLase"/>
    <property type="match status" value="1"/>
</dbReference>
<dbReference type="SUPFAM" id="SSF55681">
    <property type="entry name" value="Class II aaRS and biotin synthetases"/>
    <property type="match status" value="1"/>
</dbReference>
<dbReference type="PROSITE" id="PS51733">
    <property type="entry name" value="BPL_LPL_CATALYTIC"/>
    <property type="match status" value="1"/>
</dbReference>
<dbReference type="PROSITE" id="PS01313">
    <property type="entry name" value="LIPB"/>
    <property type="match status" value="1"/>
</dbReference>
<sequence>MVQFITIPTPIDYQDSLMLMEDYVNKVIDGEAPEAVYLVEHLDVYTAGTNYKQEELLNHNNIPVIYTGRGGKFTFHGAGQRVIYPILNLALPNRTKDLKLYVRMLEEWIINSLDIFGIKAYIIKNKVGIWVKTNDDIPSKIAAIGVRVRKWVTYHGIAINISTDLSKFNGIIPCGLENSLVTSLNQLGVYIEMTEFDKILEVEFIKIFK</sequence>
<gene>
    <name evidence="1" type="primary">lipB</name>
    <name type="ordered locus">A1I_00640</name>
</gene>
<comment type="function">
    <text evidence="1">Catalyzes the transfer of endogenously produced octanoic acid from octanoyl-acyl-carrier-protein onto the lipoyl domains of lipoate-dependent enzymes. Lipoyl-ACP can also act as a substrate although octanoyl-ACP is likely to be the physiological substrate.</text>
</comment>
<comment type="catalytic activity">
    <reaction evidence="1">
        <text>octanoyl-[ACP] + L-lysyl-[protein] = N(6)-octanoyl-L-lysyl-[protein] + holo-[ACP] + H(+)</text>
        <dbReference type="Rhea" id="RHEA:17665"/>
        <dbReference type="Rhea" id="RHEA-COMP:9636"/>
        <dbReference type="Rhea" id="RHEA-COMP:9685"/>
        <dbReference type="Rhea" id="RHEA-COMP:9752"/>
        <dbReference type="Rhea" id="RHEA-COMP:9928"/>
        <dbReference type="ChEBI" id="CHEBI:15378"/>
        <dbReference type="ChEBI" id="CHEBI:29969"/>
        <dbReference type="ChEBI" id="CHEBI:64479"/>
        <dbReference type="ChEBI" id="CHEBI:78463"/>
        <dbReference type="ChEBI" id="CHEBI:78809"/>
        <dbReference type="EC" id="2.3.1.181"/>
    </reaction>
</comment>
<comment type="pathway">
    <text evidence="1">Protein modification; protein lipoylation via endogenous pathway; protein N(6)-(lipoyl)lysine from octanoyl-[acyl-carrier-protein]: step 1/2.</text>
</comment>
<comment type="subcellular location">
    <subcellularLocation>
        <location evidence="1">Cytoplasm</location>
    </subcellularLocation>
</comment>
<comment type="miscellaneous">
    <text evidence="1">In the reaction, the free carboxyl group of octanoic acid is attached via an amide linkage to the epsilon-amino group of a specific lysine residue of lipoyl domains of lipoate-dependent enzymes.</text>
</comment>
<comment type="similarity">
    <text evidence="1">Belongs to the LipB family.</text>
</comment>
<organism>
    <name type="scientific">Rickettsia bellii (strain OSU 85-389)</name>
    <dbReference type="NCBI Taxonomy" id="391896"/>
    <lineage>
        <taxon>Bacteria</taxon>
        <taxon>Pseudomonadati</taxon>
        <taxon>Pseudomonadota</taxon>
        <taxon>Alphaproteobacteria</taxon>
        <taxon>Rickettsiales</taxon>
        <taxon>Rickettsiaceae</taxon>
        <taxon>Rickettsieae</taxon>
        <taxon>Rickettsia</taxon>
        <taxon>belli group</taxon>
    </lineage>
</organism>
<protein>
    <recommendedName>
        <fullName evidence="1">Octanoyltransferase</fullName>
        <ecNumber evidence="1">2.3.1.181</ecNumber>
    </recommendedName>
    <alternativeName>
        <fullName evidence="1">Lipoate-protein ligase B</fullName>
    </alternativeName>
    <alternativeName>
        <fullName evidence="1">Lipoyl/octanoyl transferase</fullName>
    </alternativeName>
    <alternativeName>
        <fullName evidence="1">Octanoyl-[acyl-carrier-protein]-protein N-octanoyltransferase</fullName>
    </alternativeName>
</protein>
<reference key="1">
    <citation type="submission" date="2007-09" db="EMBL/GenBank/DDBJ databases">
        <title>Complete genome sequencing of Rickettsia bellii.</title>
        <authorList>
            <person name="Madan A."/>
            <person name="Lee H."/>
            <person name="Madan A."/>
            <person name="Yoon J.-G."/>
            <person name="Ryu G.-Y."/>
            <person name="Dasch G."/>
            <person name="Ereemeva M."/>
        </authorList>
    </citation>
    <scope>NUCLEOTIDE SEQUENCE [LARGE SCALE GENOMIC DNA]</scope>
    <source>
        <strain>OSU 85-389</strain>
    </source>
</reference>